<gene>
    <name evidence="1" type="primary">hisF</name>
    <name type="ordered locus">Spro_1610</name>
</gene>
<evidence type="ECO:0000255" key="1">
    <source>
        <dbReference type="HAMAP-Rule" id="MF_01013"/>
    </source>
</evidence>
<organism>
    <name type="scientific">Serratia proteamaculans (strain 568)</name>
    <dbReference type="NCBI Taxonomy" id="399741"/>
    <lineage>
        <taxon>Bacteria</taxon>
        <taxon>Pseudomonadati</taxon>
        <taxon>Pseudomonadota</taxon>
        <taxon>Gammaproteobacteria</taxon>
        <taxon>Enterobacterales</taxon>
        <taxon>Yersiniaceae</taxon>
        <taxon>Serratia</taxon>
    </lineage>
</organism>
<dbReference type="EC" id="4.3.2.10" evidence="1"/>
<dbReference type="EMBL" id="CP000826">
    <property type="protein sequence ID" value="ABV40714.1"/>
    <property type="molecule type" value="Genomic_DNA"/>
</dbReference>
<dbReference type="SMR" id="A8GC74"/>
<dbReference type="STRING" id="399741.Spro_1610"/>
<dbReference type="KEGG" id="spe:Spro_1610"/>
<dbReference type="eggNOG" id="COG0107">
    <property type="taxonomic scope" value="Bacteria"/>
</dbReference>
<dbReference type="HOGENOM" id="CLU_048577_4_0_6"/>
<dbReference type="OrthoDB" id="9781903at2"/>
<dbReference type="UniPathway" id="UPA00031">
    <property type="reaction ID" value="UER00010"/>
</dbReference>
<dbReference type="GO" id="GO:0005737">
    <property type="term" value="C:cytoplasm"/>
    <property type="evidence" value="ECO:0007669"/>
    <property type="project" value="UniProtKB-SubCell"/>
</dbReference>
<dbReference type="GO" id="GO:0000107">
    <property type="term" value="F:imidazoleglycerol-phosphate synthase activity"/>
    <property type="evidence" value="ECO:0007669"/>
    <property type="project" value="UniProtKB-UniRule"/>
</dbReference>
<dbReference type="GO" id="GO:0016829">
    <property type="term" value="F:lyase activity"/>
    <property type="evidence" value="ECO:0007669"/>
    <property type="project" value="UniProtKB-KW"/>
</dbReference>
<dbReference type="GO" id="GO:0000105">
    <property type="term" value="P:L-histidine biosynthetic process"/>
    <property type="evidence" value="ECO:0007669"/>
    <property type="project" value="UniProtKB-UniRule"/>
</dbReference>
<dbReference type="CDD" id="cd04731">
    <property type="entry name" value="HisF"/>
    <property type="match status" value="1"/>
</dbReference>
<dbReference type="FunFam" id="3.20.20.70:FF:000006">
    <property type="entry name" value="Imidazole glycerol phosphate synthase subunit HisF"/>
    <property type="match status" value="1"/>
</dbReference>
<dbReference type="Gene3D" id="3.20.20.70">
    <property type="entry name" value="Aldolase class I"/>
    <property type="match status" value="1"/>
</dbReference>
<dbReference type="HAMAP" id="MF_01013">
    <property type="entry name" value="HisF"/>
    <property type="match status" value="1"/>
</dbReference>
<dbReference type="InterPro" id="IPR013785">
    <property type="entry name" value="Aldolase_TIM"/>
</dbReference>
<dbReference type="InterPro" id="IPR006062">
    <property type="entry name" value="His_biosynth"/>
</dbReference>
<dbReference type="InterPro" id="IPR004651">
    <property type="entry name" value="HisF"/>
</dbReference>
<dbReference type="InterPro" id="IPR050064">
    <property type="entry name" value="IGPS_HisA/HisF"/>
</dbReference>
<dbReference type="InterPro" id="IPR011060">
    <property type="entry name" value="RibuloseP-bd_barrel"/>
</dbReference>
<dbReference type="NCBIfam" id="TIGR00735">
    <property type="entry name" value="hisF"/>
    <property type="match status" value="1"/>
</dbReference>
<dbReference type="PANTHER" id="PTHR21235:SF2">
    <property type="entry name" value="IMIDAZOLE GLYCEROL PHOSPHATE SYNTHASE HISHF"/>
    <property type="match status" value="1"/>
</dbReference>
<dbReference type="PANTHER" id="PTHR21235">
    <property type="entry name" value="IMIDAZOLE GLYCEROL PHOSPHATE SYNTHASE SUBUNIT HISF/H IGP SYNTHASE SUBUNIT HISF/H"/>
    <property type="match status" value="1"/>
</dbReference>
<dbReference type="Pfam" id="PF00977">
    <property type="entry name" value="His_biosynth"/>
    <property type="match status" value="1"/>
</dbReference>
<dbReference type="SUPFAM" id="SSF51366">
    <property type="entry name" value="Ribulose-phoshate binding barrel"/>
    <property type="match status" value="1"/>
</dbReference>
<protein>
    <recommendedName>
        <fullName evidence="1">Imidazole glycerol phosphate synthase subunit HisF</fullName>
        <ecNumber evidence="1">4.3.2.10</ecNumber>
    </recommendedName>
    <alternativeName>
        <fullName evidence="1">IGP synthase cyclase subunit</fullName>
    </alternativeName>
    <alternativeName>
        <fullName evidence="1">IGP synthase subunit HisF</fullName>
    </alternativeName>
    <alternativeName>
        <fullName evidence="1">ImGP synthase subunit HisF</fullName>
        <shortName evidence="1">IGPS subunit HisF</shortName>
    </alternativeName>
</protein>
<proteinExistence type="inferred from homology"/>
<name>HIS6_SERP5</name>
<keyword id="KW-0028">Amino-acid biosynthesis</keyword>
<keyword id="KW-0963">Cytoplasm</keyword>
<keyword id="KW-0368">Histidine biosynthesis</keyword>
<keyword id="KW-0456">Lyase</keyword>
<accession>A8GC74</accession>
<reference key="1">
    <citation type="submission" date="2007-09" db="EMBL/GenBank/DDBJ databases">
        <title>Complete sequence of chromosome of Serratia proteamaculans 568.</title>
        <authorList>
            <consortium name="US DOE Joint Genome Institute"/>
            <person name="Copeland A."/>
            <person name="Lucas S."/>
            <person name="Lapidus A."/>
            <person name="Barry K."/>
            <person name="Glavina del Rio T."/>
            <person name="Dalin E."/>
            <person name="Tice H."/>
            <person name="Pitluck S."/>
            <person name="Chain P."/>
            <person name="Malfatti S."/>
            <person name="Shin M."/>
            <person name="Vergez L."/>
            <person name="Schmutz J."/>
            <person name="Larimer F."/>
            <person name="Land M."/>
            <person name="Hauser L."/>
            <person name="Kyrpides N."/>
            <person name="Kim E."/>
            <person name="Taghavi S."/>
            <person name="Newman L."/>
            <person name="Vangronsveld J."/>
            <person name="van der Lelie D."/>
            <person name="Richardson P."/>
        </authorList>
    </citation>
    <scope>NUCLEOTIDE SEQUENCE [LARGE SCALE GENOMIC DNA]</scope>
    <source>
        <strain>568</strain>
    </source>
</reference>
<sequence length="258" mass="28542">MLAKRIIPCLDVKDGQVVKGVQFRNHEIIGDIVPLAQRYAQEGADELVFYDITASSDGRVVDKSWVSRVAEVIDIPFCVAGGIKSPEDASQILSFGADKISINSPALADPTLISRLADRFGVQCIVVGIDTWFEAETGKYHVNQYTGDESRTRVTEWETLDWVKEVQKRGAGEIVLNMMNQDGVRNGYDLEQLRLVREVCKVPLIASGGAGTMEHFLEAFRDVDVDGALAASVFHKQIINIGDLKRFLSEQGVEIRLC</sequence>
<comment type="function">
    <text evidence="1">IGPS catalyzes the conversion of PRFAR and glutamine to IGP, AICAR and glutamate. The HisF subunit catalyzes the cyclization activity that produces IGP and AICAR from PRFAR using the ammonia provided by the HisH subunit.</text>
</comment>
<comment type="catalytic activity">
    <reaction evidence="1">
        <text>5-[(5-phospho-1-deoxy-D-ribulos-1-ylimino)methylamino]-1-(5-phospho-beta-D-ribosyl)imidazole-4-carboxamide + L-glutamine = D-erythro-1-(imidazol-4-yl)glycerol 3-phosphate + 5-amino-1-(5-phospho-beta-D-ribosyl)imidazole-4-carboxamide + L-glutamate + H(+)</text>
        <dbReference type="Rhea" id="RHEA:24793"/>
        <dbReference type="ChEBI" id="CHEBI:15378"/>
        <dbReference type="ChEBI" id="CHEBI:29985"/>
        <dbReference type="ChEBI" id="CHEBI:58278"/>
        <dbReference type="ChEBI" id="CHEBI:58359"/>
        <dbReference type="ChEBI" id="CHEBI:58475"/>
        <dbReference type="ChEBI" id="CHEBI:58525"/>
        <dbReference type="EC" id="4.3.2.10"/>
    </reaction>
</comment>
<comment type="pathway">
    <text evidence="1">Amino-acid biosynthesis; L-histidine biosynthesis; L-histidine from 5-phospho-alpha-D-ribose 1-diphosphate: step 5/9.</text>
</comment>
<comment type="subunit">
    <text evidence="1">Heterodimer of HisH and HisF.</text>
</comment>
<comment type="subcellular location">
    <subcellularLocation>
        <location evidence="1">Cytoplasm</location>
    </subcellularLocation>
</comment>
<comment type="similarity">
    <text evidence="1">Belongs to the HisA/HisF family.</text>
</comment>
<feature type="chain" id="PRO_1000063140" description="Imidazole glycerol phosphate synthase subunit HisF">
    <location>
        <begin position="1"/>
        <end position="258"/>
    </location>
</feature>
<feature type="active site" evidence="1">
    <location>
        <position position="11"/>
    </location>
</feature>
<feature type="active site" evidence="1">
    <location>
        <position position="130"/>
    </location>
</feature>